<proteinExistence type="inferred from homology"/>
<dbReference type="EMBL" id="AC004683">
    <property type="protein sequence ID" value="AAC28758.1"/>
    <property type="molecule type" value="Genomic_DNA"/>
</dbReference>
<dbReference type="EMBL" id="CP002685">
    <property type="protein sequence ID" value="AEC09539.1"/>
    <property type="molecule type" value="Genomic_DNA"/>
</dbReference>
<dbReference type="EMBL" id="CP002685">
    <property type="protein sequence ID" value="ANM61309.1"/>
    <property type="molecule type" value="Genomic_DNA"/>
</dbReference>
<dbReference type="EMBL" id="CP002685">
    <property type="protein sequence ID" value="ANM61311.1"/>
    <property type="molecule type" value="Genomic_DNA"/>
</dbReference>
<dbReference type="EMBL" id="CP002685">
    <property type="protein sequence ID" value="ANM61312.1"/>
    <property type="molecule type" value="Genomic_DNA"/>
</dbReference>
<dbReference type="EMBL" id="CP002685">
    <property type="protein sequence ID" value="ANM61313.1"/>
    <property type="molecule type" value="Genomic_DNA"/>
</dbReference>
<dbReference type="EMBL" id="CP002685">
    <property type="protein sequence ID" value="ANM61315.1"/>
    <property type="molecule type" value="Genomic_DNA"/>
</dbReference>
<dbReference type="PIR" id="T02499">
    <property type="entry name" value="T02499"/>
</dbReference>
<dbReference type="RefSeq" id="NP_001323535.1">
    <property type="nucleotide sequence ID" value="NM_001336703.1"/>
</dbReference>
<dbReference type="RefSeq" id="NP_001323537.1">
    <property type="nucleotide sequence ID" value="NM_001336700.1"/>
</dbReference>
<dbReference type="RefSeq" id="NP_001323538.1">
    <property type="nucleotide sequence ID" value="NM_001336704.1"/>
</dbReference>
<dbReference type="RefSeq" id="NP_001323539.1">
    <property type="nucleotide sequence ID" value="NM_001336701.1"/>
</dbReference>
<dbReference type="RefSeq" id="NP_001323541.1">
    <property type="nucleotide sequence ID" value="NM_001336705.1"/>
</dbReference>
<dbReference type="RefSeq" id="NP_181380.1">
    <property type="nucleotide sequence ID" value="NM_129402.6"/>
</dbReference>
<dbReference type="SMR" id="O80905"/>
<dbReference type="BioGRID" id="3769">
    <property type="interactions" value="4"/>
</dbReference>
<dbReference type="FunCoup" id="O80905">
    <property type="interactions" value="161"/>
</dbReference>
<dbReference type="STRING" id="3702.O80905"/>
<dbReference type="TCDB" id="2.A.100.1.3">
    <property type="family name" value="the ferroportin (fpn) family"/>
</dbReference>
<dbReference type="iPTMnet" id="O80905"/>
<dbReference type="PaxDb" id="3702-AT2G38460.1"/>
<dbReference type="EnsemblPlants" id="AT2G38460.1">
    <property type="protein sequence ID" value="AT2G38460.1"/>
    <property type="gene ID" value="AT2G38460"/>
</dbReference>
<dbReference type="EnsemblPlants" id="AT2G38460.3">
    <property type="protein sequence ID" value="AT2G38460.3"/>
    <property type="gene ID" value="AT2G38460"/>
</dbReference>
<dbReference type="EnsemblPlants" id="AT2G38460.4">
    <property type="protein sequence ID" value="AT2G38460.4"/>
    <property type="gene ID" value="AT2G38460"/>
</dbReference>
<dbReference type="EnsemblPlants" id="AT2G38460.6">
    <property type="protein sequence ID" value="AT2G38460.6"/>
    <property type="gene ID" value="AT2G38460"/>
</dbReference>
<dbReference type="EnsemblPlants" id="AT2G38460.7">
    <property type="protein sequence ID" value="AT2G38460.7"/>
    <property type="gene ID" value="AT2G38460"/>
</dbReference>
<dbReference type="EnsemblPlants" id="AT2G38460.8">
    <property type="protein sequence ID" value="AT2G38460.8"/>
    <property type="gene ID" value="AT2G38460"/>
</dbReference>
<dbReference type="GeneID" id="818427"/>
<dbReference type="Gramene" id="AT2G38460.1">
    <property type="protein sequence ID" value="AT2G38460.1"/>
    <property type="gene ID" value="AT2G38460"/>
</dbReference>
<dbReference type="Gramene" id="AT2G38460.3">
    <property type="protein sequence ID" value="AT2G38460.3"/>
    <property type="gene ID" value="AT2G38460"/>
</dbReference>
<dbReference type="Gramene" id="AT2G38460.4">
    <property type="protein sequence ID" value="AT2G38460.4"/>
    <property type="gene ID" value="AT2G38460"/>
</dbReference>
<dbReference type="Gramene" id="AT2G38460.6">
    <property type="protein sequence ID" value="AT2G38460.6"/>
    <property type="gene ID" value="AT2G38460"/>
</dbReference>
<dbReference type="Gramene" id="AT2G38460.7">
    <property type="protein sequence ID" value="AT2G38460.7"/>
    <property type="gene ID" value="AT2G38460"/>
</dbReference>
<dbReference type="Gramene" id="AT2G38460.8">
    <property type="protein sequence ID" value="AT2G38460.8"/>
    <property type="gene ID" value="AT2G38460"/>
</dbReference>
<dbReference type="KEGG" id="ath:AT2G38460"/>
<dbReference type="Araport" id="AT2G38460"/>
<dbReference type="TAIR" id="AT2G38460">
    <property type="gene designation" value="IREG1"/>
</dbReference>
<dbReference type="eggNOG" id="KOG2601">
    <property type="taxonomic scope" value="Eukaryota"/>
</dbReference>
<dbReference type="HOGENOM" id="CLU_020370_1_0_1"/>
<dbReference type="InParanoid" id="O80905"/>
<dbReference type="OMA" id="VAMGHVM"/>
<dbReference type="OrthoDB" id="648861at2759"/>
<dbReference type="PhylomeDB" id="O80905"/>
<dbReference type="PRO" id="PR:O80905"/>
<dbReference type="Proteomes" id="UP000006548">
    <property type="component" value="Chromosome 2"/>
</dbReference>
<dbReference type="ExpressionAtlas" id="O80905">
    <property type="expression patterns" value="baseline and differential"/>
</dbReference>
<dbReference type="GO" id="GO:0005886">
    <property type="term" value="C:plasma membrane"/>
    <property type="evidence" value="ECO:0000314"/>
    <property type="project" value="TAIR"/>
</dbReference>
<dbReference type="GO" id="GO:0005381">
    <property type="term" value="F:iron ion transmembrane transporter activity"/>
    <property type="evidence" value="ECO:0007669"/>
    <property type="project" value="InterPro"/>
</dbReference>
<dbReference type="GO" id="GO:0006824">
    <property type="term" value="P:cobalt ion transport"/>
    <property type="evidence" value="ECO:0000315"/>
    <property type="project" value="TAIR"/>
</dbReference>
<dbReference type="CDD" id="cd17480">
    <property type="entry name" value="MFS_SLC40A1_like"/>
    <property type="match status" value="1"/>
</dbReference>
<dbReference type="Gene3D" id="1.20.1250.20">
    <property type="entry name" value="MFS general substrate transporter like domains"/>
    <property type="match status" value="1"/>
</dbReference>
<dbReference type="InterPro" id="IPR009716">
    <property type="entry name" value="Ferroportin-1"/>
</dbReference>
<dbReference type="InterPro" id="IPR036259">
    <property type="entry name" value="MFS_trans_sf"/>
</dbReference>
<dbReference type="PANTHER" id="PTHR11660">
    <property type="entry name" value="SOLUTE CARRIER FAMILY 40 MEMBER"/>
    <property type="match status" value="1"/>
</dbReference>
<dbReference type="PANTHER" id="PTHR11660:SF68">
    <property type="entry name" value="SOLUTE CARRIER FAMILY 40 MEMBER 1"/>
    <property type="match status" value="1"/>
</dbReference>
<dbReference type="Pfam" id="PF06963">
    <property type="entry name" value="FPN1"/>
    <property type="match status" value="1"/>
</dbReference>
<dbReference type="SUPFAM" id="SSF103473">
    <property type="entry name" value="MFS general substrate transporter"/>
    <property type="match status" value="1"/>
</dbReference>
<reference key="1">
    <citation type="journal article" date="1999" name="Nature">
        <title>Sequence and analysis of chromosome 2 of the plant Arabidopsis thaliana.</title>
        <authorList>
            <person name="Lin X."/>
            <person name="Kaul S."/>
            <person name="Rounsley S.D."/>
            <person name="Shea T.P."/>
            <person name="Benito M.-I."/>
            <person name="Town C.D."/>
            <person name="Fujii C.Y."/>
            <person name="Mason T.M."/>
            <person name="Bowman C.L."/>
            <person name="Barnstead M.E."/>
            <person name="Feldblyum T.V."/>
            <person name="Buell C.R."/>
            <person name="Ketchum K.A."/>
            <person name="Lee J.J."/>
            <person name="Ronning C.M."/>
            <person name="Koo H.L."/>
            <person name="Moffat K.S."/>
            <person name="Cronin L.A."/>
            <person name="Shen M."/>
            <person name="Pai G."/>
            <person name="Van Aken S."/>
            <person name="Umayam L."/>
            <person name="Tallon L.J."/>
            <person name="Gill J.E."/>
            <person name="Adams M.D."/>
            <person name="Carrera A.J."/>
            <person name="Creasy T.H."/>
            <person name="Goodman H.M."/>
            <person name="Somerville C.R."/>
            <person name="Copenhaver G.P."/>
            <person name="Preuss D."/>
            <person name="Nierman W.C."/>
            <person name="White O."/>
            <person name="Eisen J.A."/>
            <person name="Salzberg S.L."/>
            <person name="Fraser C.M."/>
            <person name="Venter J.C."/>
        </authorList>
    </citation>
    <scope>NUCLEOTIDE SEQUENCE [LARGE SCALE GENOMIC DNA]</scope>
    <source>
        <strain>cv. Columbia</strain>
    </source>
</reference>
<reference key="2">
    <citation type="journal article" date="2017" name="Plant J.">
        <title>Araport11: a complete reannotation of the Arabidopsis thaliana reference genome.</title>
        <authorList>
            <person name="Cheng C.Y."/>
            <person name="Krishnakumar V."/>
            <person name="Chan A.P."/>
            <person name="Thibaud-Nissen F."/>
            <person name="Schobel S."/>
            <person name="Town C.D."/>
        </authorList>
    </citation>
    <scope>GENOME REANNOTATION</scope>
    <source>
        <strain>cv. Columbia</strain>
    </source>
</reference>
<gene>
    <name type="primary">IREG1</name>
    <name type="synonym">FPN1</name>
    <name type="ordered locus">At2g38460</name>
    <name type="ORF">T19C21.5</name>
</gene>
<comment type="function">
    <text evidence="1">May be involved in iron transport and iron homeostasis.</text>
</comment>
<comment type="subcellular location">
    <subcellularLocation>
        <location evidence="4">Membrane</location>
        <topology evidence="4">Multi-pass membrane protein</topology>
    </subcellularLocation>
</comment>
<comment type="similarity">
    <text evidence="4">Belongs to the ferroportin (FP) (TC 2.A.100) family. SLC40A subfamily.</text>
</comment>
<accession>O80905</accession>
<organism>
    <name type="scientific">Arabidopsis thaliana</name>
    <name type="common">Mouse-ear cress</name>
    <dbReference type="NCBI Taxonomy" id="3702"/>
    <lineage>
        <taxon>Eukaryota</taxon>
        <taxon>Viridiplantae</taxon>
        <taxon>Streptophyta</taxon>
        <taxon>Embryophyta</taxon>
        <taxon>Tracheophyta</taxon>
        <taxon>Spermatophyta</taxon>
        <taxon>Magnoliopsida</taxon>
        <taxon>eudicotyledons</taxon>
        <taxon>Gunneridae</taxon>
        <taxon>Pentapetalae</taxon>
        <taxon>rosids</taxon>
        <taxon>malvids</taxon>
        <taxon>Brassicales</taxon>
        <taxon>Brassicaceae</taxon>
        <taxon>Camelineae</taxon>
        <taxon>Arabidopsis</taxon>
    </lineage>
</organism>
<evidence type="ECO:0000250" key="1"/>
<evidence type="ECO:0000255" key="2"/>
<evidence type="ECO:0000256" key="3">
    <source>
        <dbReference type="SAM" id="MobiDB-lite"/>
    </source>
</evidence>
<evidence type="ECO:0000305" key="4"/>
<sequence length="524" mass="58204">MENETELRVVHQEEQQREEGEDESQPQNPPPALRRRFVIYLYVGYFLARWSARTWEFSVALYMIHLWPNSLLLAAIYGAIESGSTAIFGPIVGQWVEGMDYVKVLRLWLLFQNLSYTIAGGAVIKLLLVSDLKSRNLPVFAILIVLTNLAGAIGVLSTLAGTILIERDWAVVMSEGHPPAVLTKMNSVIRGIDLSSKLLSPVITGLIISFVSLKASAITFAAWATITAWVEYWLFISVYSGVPAITRSNERRILRSRTKQVEGRDAPVSVSIVPGTEEGYTGNPPSRTGILVILDRMSKSSFVGAWRIYFNQEVVLPGVSLALLFFTVLSFGTLMTATLQWEGIPTYIIGIGRGISATVGLAATLVYPLMQSRLSTLRTGLWSFWSQWSCLLVCVGSIWVKKDKIASYMLMAGVAASRLGLWMFDLAVIQQMQDLVSESDRCVVGGVQNSLQSALDLMAYLLGIIVSNPKDFWILTLISFSTVSLAGMLYTIHLYRIRNHIFHLEKIPLLNKCIFKLLPSRGNV</sequence>
<keyword id="KW-0406">Ion transport</keyword>
<keyword id="KW-0472">Membrane</keyword>
<keyword id="KW-1185">Reference proteome</keyword>
<keyword id="KW-0812">Transmembrane</keyword>
<keyword id="KW-1133">Transmembrane helix</keyword>
<keyword id="KW-0813">Transport</keyword>
<protein>
    <recommendedName>
        <fullName>Solute carrier family 40 member 1</fullName>
    </recommendedName>
    <alternativeName>
        <fullName>Ferroportin-1</fullName>
    </alternativeName>
    <alternativeName>
        <fullName>Iron-regulated transporter 1</fullName>
        <shortName>AtIREG1</shortName>
    </alternativeName>
</protein>
<feature type="chain" id="PRO_0000415898" description="Solute carrier family 40 member 1">
    <location>
        <begin position="1"/>
        <end position="524"/>
    </location>
</feature>
<feature type="transmembrane region" description="Helical" evidence="2">
    <location>
        <begin position="70"/>
        <end position="92"/>
    </location>
</feature>
<feature type="transmembrane region" description="Helical" evidence="2">
    <location>
        <begin position="109"/>
        <end position="129"/>
    </location>
</feature>
<feature type="transmembrane region" description="Helical" evidence="2">
    <location>
        <begin position="137"/>
        <end position="157"/>
    </location>
</feature>
<feature type="transmembrane region" description="Helical" evidence="2">
    <location>
        <begin position="191"/>
        <end position="211"/>
    </location>
</feature>
<feature type="transmembrane region" description="Helical" evidence="2">
    <location>
        <begin position="218"/>
        <end position="238"/>
    </location>
</feature>
<feature type="transmembrane region" description="Helical" evidence="2">
    <location>
        <begin position="314"/>
        <end position="334"/>
    </location>
</feature>
<feature type="transmembrane region" description="Helical" evidence="2">
    <location>
        <begin position="347"/>
        <end position="367"/>
    </location>
</feature>
<feature type="transmembrane region" description="Helical" evidence="2">
    <location>
        <begin position="380"/>
        <end position="400"/>
    </location>
</feature>
<feature type="transmembrane region" description="Helical" evidence="2">
    <location>
        <begin position="409"/>
        <end position="429"/>
    </location>
</feature>
<feature type="transmembrane region" description="Helical" evidence="2">
    <location>
        <begin position="446"/>
        <end position="466"/>
    </location>
</feature>
<feature type="transmembrane region" description="Helical" evidence="2">
    <location>
        <begin position="472"/>
        <end position="492"/>
    </location>
</feature>
<feature type="region of interest" description="Disordered" evidence="3">
    <location>
        <begin position="1"/>
        <end position="30"/>
    </location>
</feature>
<feature type="compositionally biased region" description="Basic and acidic residues" evidence="3">
    <location>
        <begin position="1"/>
        <end position="18"/>
    </location>
</feature>
<name>S40A1_ARATH</name>